<protein>
    <recommendedName>
        <fullName>Equilibrative nucleotide transporter 5</fullName>
        <shortName>AtENT5</shortName>
    </recommendedName>
    <alternativeName>
        <fullName>Nucleoside transporter ENT5</fullName>
    </alternativeName>
</protein>
<gene>
    <name type="primary">ENT5</name>
    <name type="ordered locus">At4g05140</name>
    <name type="ORF">C17L7.60</name>
    <name type="ORF">T32N4</name>
</gene>
<feature type="chain" id="PRO_0000419158" description="Equilibrative nucleotide transporter 5">
    <location>
        <begin position="1"/>
        <end position="419"/>
    </location>
</feature>
<feature type="transmembrane region" description="Helical" evidence="2">
    <location>
        <begin position="20"/>
        <end position="40"/>
    </location>
</feature>
<feature type="transmembrane region" description="Helical" evidence="2">
    <location>
        <begin position="56"/>
        <end position="76"/>
    </location>
</feature>
<feature type="transmembrane region" description="Helical" evidence="2">
    <location>
        <begin position="86"/>
        <end position="106"/>
    </location>
</feature>
<feature type="transmembrane region" description="Helical" evidence="2">
    <location>
        <begin position="108"/>
        <end position="128"/>
    </location>
</feature>
<feature type="transmembrane region" description="Helical" evidence="2">
    <location>
        <begin position="142"/>
        <end position="162"/>
    </location>
</feature>
<feature type="transmembrane region" description="Helical" evidence="2">
    <location>
        <begin position="186"/>
        <end position="206"/>
    </location>
</feature>
<feature type="transmembrane region" description="Helical" evidence="2">
    <location>
        <begin position="265"/>
        <end position="285"/>
    </location>
</feature>
<feature type="transmembrane region" description="Helical" evidence="2">
    <location>
        <begin position="292"/>
        <end position="312"/>
    </location>
</feature>
<feature type="transmembrane region" description="Helical" evidence="2">
    <location>
        <begin position="327"/>
        <end position="347"/>
    </location>
</feature>
<feature type="transmembrane region" description="Helical" evidence="2">
    <location>
        <begin position="354"/>
        <end position="374"/>
    </location>
</feature>
<feature type="transmembrane region" description="Helical" evidence="2">
    <location>
        <begin position="393"/>
        <end position="413"/>
    </location>
</feature>
<organism>
    <name type="scientific">Arabidopsis thaliana</name>
    <name type="common">Mouse-ear cress</name>
    <dbReference type="NCBI Taxonomy" id="3702"/>
    <lineage>
        <taxon>Eukaryota</taxon>
        <taxon>Viridiplantae</taxon>
        <taxon>Streptophyta</taxon>
        <taxon>Embryophyta</taxon>
        <taxon>Tracheophyta</taxon>
        <taxon>Spermatophyta</taxon>
        <taxon>Magnoliopsida</taxon>
        <taxon>eudicotyledons</taxon>
        <taxon>Gunneridae</taxon>
        <taxon>Pentapetalae</taxon>
        <taxon>rosids</taxon>
        <taxon>malvids</taxon>
        <taxon>Brassicales</taxon>
        <taxon>Brassicaceae</taxon>
        <taxon>Camelineae</taxon>
        <taxon>Arabidopsis</taxon>
    </lineage>
</organism>
<keyword id="KW-1003">Cell membrane</keyword>
<keyword id="KW-0472">Membrane</keyword>
<keyword id="KW-1185">Reference proteome</keyword>
<keyword id="KW-0812">Transmembrane</keyword>
<keyword id="KW-1133">Transmembrane helix</keyword>
<keyword id="KW-0813">Transport</keyword>
<evidence type="ECO:0000250" key="1"/>
<evidence type="ECO:0000255" key="2"/>
<evidence type="ECO:0000305" key="3"/>
<proteinExistence type="evidence at transcript level"/>
<dbReference type="EMBL" id="AF162444">
    <property type="status" value="NOT_ANNOTATED_CDS"/>
    <property type="molecule type" value="Genomic_DNA"/>
</dbReference>
<dbReference type="EMBL" id="AL161502">
    <property type="protein sequence ID" value="CAB81056.1"/>
    <property type="molecule type" value="Genomic_DNA"/>
</dbReference>
<dbReference type="EMBL" id="CP002687">
    <property type="protein sequence ID" value="AEE82484.1"/>
    <property type="molecule type" value="Genomic_DNA"/>
</dbReference>
<dbReference type="EMBL" id="DQ056645">
    <property type="protein sequence ID" value="AAY78793.1"/>
    <property type="molecule type" value="mRNA"/>
</dbReference>
<dbReference type="PIR" id="F85064">
    <property type="entry name" value="F85064"/>
</dbReference>
<dbReference type="RefSeq" id="NP_192423.1">
    <property type="nucleotide sequence ID" value="NM_116753.1"/>
</dbReference>
<dbReference type="SMR" id="Q9M0Y1"/>
<dbReference type="FunCoup" id="Q9M0Y1">
    <property type="interactions" value="70"/>
</dbReference>
<dbReference type="STRING" id="3702.Q9M0Y1"/>
<dbReference type="PaxDb" id="3702-AT4G05140.1"/>
<dbReference type="EnsemblPlants" id="AT4G05140.1">
    <property type="protein sequence ID" value="AT4G05140.1"/>
    <property type="gene ID" value="AT4G05140"/>
</dbReference>
<dbReference type="GeneID" id="825861"/>
<dbReference type="Gramene" id="AT4G05140.1">
    <property type="protein sequence ID" value="AT4G05140.1"/>
    <property type="gene ID" value="AT4G05140"/>
</dbReference>
<dbReference type="KEGG" id="ath:AT4G05140"/>
<dbReference type="Araport" id="AT4G05140"/>
<dbReference type="TAIR" id="AT4G05140"/>
<dbReference type="eggNOG" id="KOG1479">
    <property type="taxonomic scope" value="Eukaryota"/>
</dbReference>
<dbReference type="HOGENOM" id="CLU_021611_5_1_1"/>
<dbReference type="InParanoid" id="Q9M0Y1"/>
<dbReference type="OMA" id="VHSDEQH"/>
<dbReference type="PhylomeDB" id="Q9M0Y1"/>
<dbReference type="PRO" id="PR:Q9M0Y1"/>
<dbReference type="Proteomes" id="UP000006548">
    <property type="component" value="Chromosome 4"/>
</dbReference>
<dbReference type="ExpressionAtlas" id="Q9M0Y1">
    <property type="expression patterns" value="baseline and differential"/>
</dbReference>
<dbReference type="GO" id="GO:0005886">
    <property type="term" value="C:plasma membrane"/>
    <property type="evidence" value="ECO:0007669"/>
    <property type="project" value="UniProtKB-SubCell"/>
</dbReference>
<dbReference type="GO" id="GO:0005337">
    <property type="term" value="F:nucleoside transmembrane transporter activity"/>
    <property type="evidence" value="ECO:0007669"/>
    <property type="project" value="InterPro"/>
</dbReference>
<dbReference type="InterPro" id="IPR002259">
    <property type="entry name" value="Eqnu_transpt"/>
</dbReference>
<dbReference type="PANTHER" id="PTHR10332">
    <property type="entry name" value="EQUILIBRATIVE NUCLEOSIDE TRANSPORTER"/>
    <property type="match status" value="1"/>
</dbReference>
<dbReference type="PANTHER" id="PTHR10332:SF38">
    <property type="entry name" value="EQUILIBRATIVE NUCLEOTIDE TRANSPORTER 3-RELATED"/>
    <property type="match status" value="1"/>
</dbReference>
<dbReference type="Pfam" id="PF01733">
    <property type="entry name" value="Nucleoside_tran"/>
    <property type="match status" value="1"/>
</dbReference>
<dbReference type="PIRSF" id="PIRSF016379">
    <property type="entry name" value="ENT"/>
    <property type="match status" value="1"/>
</dbReference>
<reference key="1">
    <citation type="journal article" date="1999" name="Nature">
        <title>Sequence and analysis of chromosome 4 of the plant Arabidopsis thaliana.</title>
        <authorList>
            <person name="Mayer K.F.X."/>
            <person name="Schueller C."/>
            <person name="Wambutt R."/>
            <person name="Murphy G."/>
            <person name="Volckaert G."/>
            <person name="Pohl T."/>
            <person name="Duesterhoeft A."/>
            <person name="Stiekema W."/>
            <person name="Entian K.-D."/>
            <person name="Terryn N."/>
            <person name="Harris B."/>
            <person name="Ansorge W."/>
            <person name="Brandt P."/>
            <person name="Grivell L.A."/>
            <person name="Rieger M."/>
            <person name="Weichselgartner M."/>
            <person name="de Simone V."/>
            <person name="Obermaier B."/>
            <person name="Mache R."/>
            <person name="Mueller M."/>
            <person name="Kreis M."/>
            <person name="Delseny M."/>
            <person name="Puigdomenech P."/>
            <person name="Watson M."/>
            <person name="Schmidtheini T."/>
            <person name="Reichert B."/>
            <person name="Portetelle D."/>
            <person name="Perez-Alonso M."/>
            <person name="Boutry M."/>
            <person name="Bancroft I."/>
            <person name="Vos P."/>
            <person name="Hoheisel J."/>
            <person name="Zimmermann W."/>
            <person name="Wedler H."/>
            <person name="Ridley P."/>
            <person name="Langham S.-A."/>
            <person name="McCullagh B."/>
            <person name="Bilham L."/>
            <person name="Robben J."/>
            <person name="van der Schueren J."/>
            <person name="Grymonprez B."/>
            <person name="Chuang Y.-J."/>
            <person name="Vandenbussche F."/>
            <person name="Braeken M."/>
            <person name="Weltjens I."/>
            <person name="Voet M."/>
            <person name="Bastiaens I."/>
            <person name="Aert R."/>
            <person name="Defoor E."/>
            <person name="Weitzenegger T."/>
            <person name="Bothe G."/>
            <person name="Ramsperger U."/>
            <person name="Hilbert H."/>
            <person name="Braun M."/>
            <person name="Holzer E."/>
            <person name="Brandt A."/>
            <person name="Peters S."/>
            <person name="van Staveren M."/>
            <person name="Dirkse W."/>
            <person name="Mooijman P."/>
            <person name="Klein Lankhorst R."/>
            <person name="Rose M."/>
            <person name="Hauf J."/>
            <person name="Koetter P."/>
            <person name="Berneiser S."/>
            <person name="Hempel S."/>
            <person name="Feldpausch M."/>
            <person name="Lamberth S."/>
            <person name="Van den Daele H."/>
            <person name="De Keyser A."/>
            <person name="Buysshaert C."/>
            <person name="Gielen J."/>
            <person name="Villarroel R."/>
            <person name="De Clercq R."/>
            <person name="van Montagu M."/>
            <person name="Rogers J."/>
            <person name="Cronin A."/>
            <person name="Quail M.A."/>
            <person name="Bray-Allen S."/>
            <person name="Clark L."/>
            <person name="Doggett J."/>
            <person name="Hall S."/>
            <person name="Kay M."/>
            <person name="Lennard N."/>
            <person name="McLay K."/>
            <person name="Mayes R."/>
            <person name="Pettett A."/>
            <person name="Rajandream M.A."/>
            <person name="Lyne M."/>
            <person name="Benes V."/>
            <person name="Rechmann S."/>
            <person name="Borkova D."/>
            <person name="Bloecker H."/>
            <person name="Scharfe M."/>
            <person name="Grimm M."/>
            <person name="Loehnert T.-H."/>
            <person name="Dose S."/>
            <person name="de Haan M."/>
            <person name="Maarse A.C."/>
            <person name="Schaefer M."/>
            <person name="Mueller-Auer S."/>
            <person name="Gabel C."/>
            <person name="Fuchs M."/>
            <person name="Fartmann B."/>
            <person name="Granderath K."/>
            <person name="Dauner D."/>
            <person name="Herzl A."/>
            <person name="Neumann S."/>
            <person name="Argiriou A."/>
            <person name="Vitale D."/>
            <person name="Liguori R."/>
            <person name="Piravandi E."/>
            <person name="Massenet O."/>
            <person name="Quigley F."/>
            <person name="Clabauld G."/>
            <person name="Muendlein A."/>
            <person name="Felber R."/>
            <person name="Schnabl S."/>
            <person name="Hiller R."/>
            <person name="Schmidt W."/>
            <person name="Lecharny A."/>
            <person name="Aubourg S."/>
            <person name="Chefdor F."/>
            <person name="Cooke R."/>
            <person name="Berger C."/>
            <person name="Monfort A."/>
            <person name="Casacuberta E."/>
            <person name="Gibbons T."/>
            <person name="Weber N."/>
            <person name="Vandenbol M."/>
            <person name="Bargues M."/>
            <person name="Terol J."/>
            <person name="Torres A."/>
            <person name="Perez-Perez A."/>
            <person name="Purnelle B."/>
            <person name="Bent E."/>
            <person name="Johnson S."/>
            <person name="Tacon D."/>
            <person name="Jesse T."/>
            <person name="Heijnen L."/>
            <person name="Schwarz S."/>
            <person name="Scholler P."/>
            <person name="Heber S."/>
            <person name="Francs P."/>
            <person name="Bielke C."/>
            <person name="Frishman D."/>
            <person name="Haase D."/>
            <person name="Lemcke K."/>
            <person name="Mewes H.-W."/>
            <person name="Stocker S."/>
            <person name="Zaccaria P."/>
            <person name="Bevan M."/>
            <person name="Wilson R.K."/>
            <person name="de la Bastide M."/>
            <person name="Habermann K."/>
            <person name="Parnell L."/>
            <person name="Dedhia N."/>
            <person name="Gnoj L."/>
            <person name="Schutz K."/>
            <person name="Huang E."/>
            <person name="Spiegel L."/>
            <person name="Sekhon M."/>
            <person name="Murray J."/>
            <person name="Sheet P."/>
            <person name="Cordes M."/>
            <person name="Abu-Threideh J."/>
            <person name="Stoneking T."/>
            <person name="Kalicki J."/>
            <person name="Graves T."/>
            <person name="Harmon G."/>
            <person name="Edwards J."/>
            <person name="Latreille P."/>
            <person name="Courtney L."/>
            <person name="Cloud J."/>
            <person name="Abbott A."/>
            <person name="Scott K."/>
            <person name="Johnson D."/>
            <person name="Minx P."/>
            <person name="Bentley D."/>
            <person name="Fulton B."/>
            <person name="Miller N."/>
            <person name="Greco T."/>
            <person name="Kemp K."/>
            <person name="Kramer J."/>
            <person name="Fulton L."/>
            <person name="Mardis E."/>
            <person name="Dante M."/>
            <person name="Pepin K."/>
            <person name="Hillier L.W."/>
            <person name="Nelson J."/>
            <person name="Spieth J."/>
            <person name="Ryan E."/>
            <person name="Andrews S."/>
            <person name="Geisel C."/>
            <person name="Layman D."/>
            <person name="Du H."/>
            <person name="Ali J."/>
            <person name="Berghoff A."/>
            <person name="Jones K."/>
            <person name="Drone K."/>
            <person name="Cotton M."/>
            <person name="Joshu C."/>
            <person name="Antonoiu B."/>
            <person name="Zidanic M."/>
            <person name="Strong C."/>
            <person name="Sun H."/>
            <person name="Lamar B."/>
            <person name="Yordan C."/>
            <person name="Ma P."/>
            <person name="Zhong J."/>
            <person name="Preston R."/>
            <person name="Vil D."/>
            <person name="Shekher M."/>
            <person name="Matero A."/>
            <person name="Shah R."/>
            <person name="Swaby I.K."/>
            <person name="O'Shaughnessy A."/>
            <person name="Rodriguez M."/>
            <person name="Hoffman J."/>
            <person name="Till S."/>
            <person name="Granat S."/>
            <person name="Shohdy N."/>
            <person name="Hasegawa A."/>
            <person name="Hameed A."/>
            <person name="Lodhi M."/>
            <person name="Johnson A."/>
            <person name="Chen E."/>
            <person name="Marra M.A."/>
            <person name="Martienssen R."/>
            <person name="McCombie W.R."/>
        </authorList>
    </citation>
    <scope>NUCLEOTIDE SEQUENCE [LARGE SCALE GENOMIC DNA]</scope>
    <source>
        <strain>cv. Columbia</strain>
    </source>
</reference>
<reference key="2">
    <citation type="journal article" date="2017" name="Plant J.">
        <title>Araport11: a complete reannotation of the Arabidopsis thaliana reference genome.</title>
        <authorList>
            <person name="Cheng C.Y."/>
            <person name="Krishnakumar V."/>
            <person name="Chan A.P."/>
            <person name="Thibaud-Nissen F."/>
            <person name="Schobel S."/>
            <person name="Town C.D."/>
        </authorList>
    </citation>
    <scope>GENOME REANNOTATION</scope>
    <source>
        <strain>cv. Columbia</strain>
    </source>
</reference>
<reference key="3">
    <citation type="submission" date="2005-05" db="EMBL/GenBank/DDBJ databases">
        <authorList>
            <person name="Underwood B.A."/>
            <person name="Xiao Y.-L."/>
            <person name="Moskal W.A. Jr."/>
            <person name="Monaghan E.L."/>
            <person name="Wang W."/>
            <person name="Redman J.C."/>
            <person name="Wu H.C."/>
            <person name="Utterback T."/>
            <person name="Town C.D."/>
        </authorList>
    </citation>
    <scope>NUCLEOTIDE SEQUENCE [LARGE SCALE MRNA]</scope>
    <source>
        <strain>cv. Columbia</strain>
    </source>
</reference>
<accession>Q9M0Y1</accession>
<name>ENT5_ARATH</name>
<sequence length="419" mass="46295">MVARFENQAPENLHGKYQAMVVCCILGIGSLVSWNSLLSVGDYYYQVFPDYHPSRVLTFVYQPFSIGTIVIFAYNESKINTRKRNLIGYIVFTTSIFLLIILDLATKGHGGIGPYIVLCAIVGSFGFADASVRGGMIGDLSLMCPELIQSFVAGLAVAGALTSAFRLITKAAFEKTHDGLRKGAMIFLAISTLVEFLCVLLYAYVFPKLPIVKYYRSKAASEGSKTVYADLAAAGIQNQSVLTADDVSKDKRLNNKELLLENVDYVVNLFLIYVLTLSILPGFLYENTGQHGLGSWYALVLIAMYNWWDLVGRYIPMVKWLNVENRKGLTVAVLTRFLLVPAFYFTAKYGDQGWMILLVSILGLTNGHLTVCILAKAPRGYTGPEKNALGNLLVLFILWGAFVGCALGWLWLIGKKNAF</sequence>
<comment type="function">
    <text evidence="1">May be involved in nucleoside transport.</text>
</comment>
<comment type="subcellular location">
    <subcellularLocation>
        <location evidence="1">Cell membrane</location>
        <topology evidence="3">Multi-pass membrane protein</topology>
    </subcellularLocation>
    <text>Plasma membrane.</text>
</comment>
<comment type="similarity">
    <text evidence="3">Belongs to the SLC29A/ENT transporter (TC 2.A.57) family.</text>
</comment>